<gene>
    <name type="primary">ADHFE1</name>
</gene>
<name>HOT_BOVIN</name>
<sequence>MAAARSRVVHLLRLLQRAACQCPSHSHTYSQAPGLSPSGKTTDYAFEMAVSTIRYGAGVTKEVGMDLQSMGAKNVCLMTDKNLSQLPPVQTVMDSLVKNGINFKVYDHVRVEPTDTSFMEAIEFAKKGAFDAFLAVGGGSTIDTCKAANLYSSSPDSDFLDYVNAPIGKGKPVTVPLKPLIAVPTTSGTGSETTGVAIFDYEHLKVKTGIASRAIKPTLGLIDPLHTLHMPERVVANSGFDVLCHALESYTALPYHMRSPCPSSPITRPAYQGSNPISDIWAVHALRIVAKYLKRAIRNPDDLEARSNMHLASAFAGIGFGNAGVHLCHGMSYPISGLVKTYKAKDYNVDHPLVPHGLSVVLTSPAVFTFTSQMFPERHLEVAEILGADTRTARRPDAGPVLADTLRKFLFDLDVDDGLAAIGYSKADIPELVKGTLPQERVTKLAPRPQSEEDLSALFEASMKLY</sequence>
<accession>A6QP15</accession>
<protein>
    <recommendedName>
        <fullName>Hydroxyacid-oxoacid transhydrogenase, mitochondrial</fullName>
        <shortName>HOT</shortName>
        <ecNumber>1.1.99.24</ecNumber>
    </recommendedName>
    <alternativeName>
        <fullName>Alcohol dehydrogenase iron-containing protein 1</fullName>
        <shortName>ADHFe1</shortName>
    </alternativeName>
</protein>
<comment type="function">
    <text evidence="1">Catalyzes the cofactor-independent reversible oxidation of gamma-hydroxybutyrate (GHB) to succinic semialdehyde (SSA) coupled to reduction of 2-ketoglutarate (2-KG) to D-2-hydroxyglutarate (D-2-HG). L-3-hydroxybutyrate (L-3-OHB) is also a substrate for HOT when using 2-KG as hydrogen acceptor, resulting in the formation of D-2-HG (By similarity).</text>
</comment>
<comment type="catalytic activity">
    <reaction>
        <text>(S)-3-hydroxybutanoate + 2-oxoglutarate = (R)-2-hydroxyglutarate + acetoacetate</text>
        <dbReference type="Rhea" id="RHEA:23048"/>
        <dbReference type="ChEBI" id="CHEBI:11047"/>
        <dbReference type="ChEBI" id="CHEBI:13705"/>
        <dbReference type="ChEBI" id="CHEBI:15801"/>
        <dbReference type="ChEBI" id="CHEBI:16810"/>
        <dbReference type="EC" id="1.1.99.24"/>
    </reaction>
</comment>
<comment type="catalytic activity">
    <reaction>
        <text>4-hydroxybutanoate + 2-oxoglutarate = (R)-2-hydroxyglutarate + succinate semialdehyde</text>
        <dbReference type="Rhea" id="RHEA:24734"/>
        <dbReference type="ChEBI" id="CHEBI:15801"/>
        <dbReference type="ChEBI" id="CHEBI:16724"/>
        <dbReference type="ChEBI" id="CHEBI:16810"/>
        <dbReference type="ChEBI" id="CHEBI:57706"/>
        <dbReference type="EC" id="1.1.99.24"/>
    </reaction>
</comment>
<comment type="subcellular location">
    <subcellularLocation>
        <location evidence="1">Mitochondrion</location>
    </subcellularLocation>
</comment>
<comment type="similarity">
    <text evidence="4">Belongs to the iron-containing alcohol dehydrogenase family. Hydroxyacid-oxoacid transhydrogenase subfamily.</text>
</comment>
<evidence type="ECO:0000250" key="1"/>
<evidence type="ECO:0000250" key="2">
    <source>
        <dbReference type="UniProtKB" id="Q8R0N6"/>
    </source>
</evidence>
<evidence type="ECO:0000255" key="3"/>
<evidence type="ECO:0000305" key="4"/>
<proteinExistence type="evidence at transcript level"/>
<keyword id="KW-0007">Acetylation</keyword>
<keyword id="KW-0443">Lipid metabolism</keyword>
<keyword id="KW-0496">Mitochondrion</keyword>
<keyword id="KW-0560">Oxidoreductase</keyword>
<keyword id="KW-0597">Phosphoprotein</keyword>
<keyword id="KW-1185">Reference proteome</keyword>
<keyword id="KW-0809">Transit peptide</keyword>
<feature type="transit peptide" description="Mitochondrion" evidence="3">
    <location>
        <begin position="1"/>
        <end status="unknown"/>
    </location>
</feature>
<feature type="chain" id="PRO_0000322995" description="Hydroxyacid-oxoacid transhydrogenase, mitochondrial">
    <location>
        <begin status="unknown"/>
        <end position="466"/>
    </location>
</feature>
<feature type="modified residue" description="N6-acetyllysine" evidence="2">
    <location>
        <position position="444"/>
    </location>
</feature>
<feature type="modified residue" description="Phosphoserine" evidence="2">
    <location>
        <position position="451"/>
    </location>
</feature>
<reference key="1">
    <citation type="submission" date="2007-07" db="EMBL/GenBank/DDBJ databases">
        <authorList>
            <consortium name="NIH - Mammalian Gene Collection (MGC) project"/>
        </authorList>
    </citation>
    <scope>NUCLEOTIDE SEQUENCE [LARGE SCALE MRNA]</scope>
    <source>
        <strain>Hereford</strain>
        <tissue>Brain cortex</tissue>
    </source>
</reference>
<dbReference type="EC" id="1.1.99.24"/>
<dbReference type="EMBL" id="BC149097">
    <property type="protein sequence ID" value="AAI49098.1"/>
    <property type="molecule type" value="mRNA"/>
</dbReference>
<dbReference type="RefSeq" id="NP_001095357.1">
    <property type="nucleotide sequence ID" value="NM_001101887.1"/>
</dbReference>
<dbReference type="SMR" id="A6QP15"/>
<dbReference type="FunCoup" id="A6QP15">
    <property type="interactions" value="291"/>
</dbReference>
<dbReference type="STRING" id="9913.ENSBTAP00000005874"/>
<dbReference type="PaxDb" id="9913-ENSBTAP00000005874"/>
<dbReference type="PeptideAtlas" id="A6QP15"/>
<dbReference type="Ensembl" id="ENSBTAT00000005874.6">
    <property type="protein sequence ID" value="ENSBTAP00000005874.6"/>
    <property type="gene ID" value="ENSBTAG00000004476.6"/>
</dbReference>
<dbReference type="GeneID" id="507711"/>
<dbReference type="KEGG" id="bta:507711"/>
<dbReference type="CTD" id="137872"/>
<dbReference type="VEuPathDB" id="HostDB:ENSBTAG00000004476"/>
<dbReference type="VGNC" id="VGNC:25674">
    <property type="gene designation" value="ADHFE1"/>
</dbReference>
<dbReference type="eggNOG" id="KOG3857">
    <property type="taxonomic scope" value="Eukaryota"/>
</dbReference>
<dbReference type="GeneTree" id="ENSGT00390000003849"/>
<dbReference type="InParanoid" id="A6QP15"/>
<dbReference type="OMA" id="NLMGAGC"/>
<dbReference type="OrthoDB" id="339764at2759"/>
<dbReference type="Reactome" id="R-BTA-880009">
    <property type="pathway name" value="Interconversion of 2-oxoglutarate and 2-hydroxyglutarate"/>
</dbReference>
<dbReference type="Proteomes" id="UP000009136">
    <property type="component" value="Chromosome 14"/>
</dbReference>
<dbReference type="Bgee" id="ENSBTAG00000004476">
    <property type="expression patterns" value="Expressed in liver and 105 other cell types or tissues"/>
</dbReference>
<dbReference type="GO" id="GO:0005739">
    <property type="term" value="C:mitochondrion"/>
    <property type="evidence" value="ECO:0000250"/>
    <property type="project" value="UniProtKB"/>
</dbReference>
<dbReference type="GO" id="GO:0004022">
    <property type="term" value="F:alcohol dehydrogenase (NAD+) activity"/>
    <property type="evidence" value="ECO:0000318"/>
    <property type="project" value="GO_Central"/>
</dbReference>
<dbReference type="GO" id="GO:0047988">
    <property type="term" value="F:hydroxyacid-oxoacid transhydrogenase activity"/>
    <property type="evidence" value="ECO:0000250"/>
    <property type="project" value="UniProtKB"/>
</dbReference>
<dbReference type="GO" id="GO:0046872">
    <property type="term" value="F:metal ion binding"/>
    <property type="evidence" value="ECO:0007669"/>
    <property type="project" value="InterPro"/>
</dbReference>
<dbReference type="GO" id="GO:0019552">
    <property type="term" value="P:glutamate catabolic process via 2-hydroxyglutarate"/>
    <property type="evidence" value="ECO:0000250"/>
    <property type="project" value="UniProtKB"/>
</dbReference>
<dbReference type="GO" id="GO:0006629">
    <property type="term" value="P:lipid metabolic process"/>
    <property type="evidence" value="ECO:0007669"/>
    <property type="project" value="UniProtKB-KW"/>
</dbReference>
<dbReference type="CDD" id="cd08190">
    <property type="entry name" value="HOT"/>
    <property type="match status" value="1"/>
</dbReference>
<dbReference type="FunFam" id="1.20.1090.10:FF:000003">
    <property type="entry name" value="Probable hydroxyacid-oxoacid transhydrogenase, mitochondrial"/>
    <property type="match status" value="1"/>
</dbReference>
<dbReference type="FunFam" id="3.40.50.1970:FF:000010">
    <property type="entry name" value="Probable hydroxyacid-oxoacid transhydrogenase, mitochondrial"/>
    <property type="match status" value="1"/>
</dbReference>
<dbReference type="Gene3D" id="3.40.50.1970">
    <property type="match status" value="1"/>
</dbReference>
<dbReference type="Gene3D" id="1.20.1090.10">
    <property type="entry name" value="Dehydroquinate synthase-like - alpha domain"/>
    <property type="match status" value="1"/>
</dbReference>
<dbReference type="InterPro" id="IPR001670">
    <property type="entry name" value="ADH_Fe/GldA"/>
</dbReference>
<dbReference type="InterPro" id="IPR056798">
    <property type="entry name" value="ADH_Fe_C"/>
</dbReference>
<dbReference type="InterPro" id="IPR039697">
    <property type="entry name" value="Alcohol_dehydrogenase_Fe"/>
</dbReference>
<dbReference type="InterPro" id="IPR042157">
    <property type="entry name" value="HOT"/>
</dbReference>
<dbReference type="PANTHER" id="PTHR11496">
    <property type="entry name" value="ALCOHOL DEHYDROGENASE"/>
    <property type="match status" value="1"/>
</dbReference>
<dbReference type="PANTHER" id="PTHR11496:SF83">
    <property type="entry name" value="HYDROXYACID-OXOACID TRANSHYDROGENASE, MITOCHONDRIAL"/>
    <property type="match status" value="1"/>
</dbReference>
<dbReference type="Pfam" id="PF25137">
    <property type="entry name" value="ADH_Fe_C"/>
    <property type="match status" value="1"/>
</dbReference>
<dbReference type="Pfam" id="PF00465">
    <property type="entry name" value="Fe-ADH"/>
    <property type="match status" value="1"/>
</dbReference>
<dbReference type="SUPFAM" id="SSF56796">
    <property type="entry name" value="Dehydroquinate synthase-like"/>
    <property type="match status" value="1"/>
</dbReference>
<organism>
    <name type="scientific">Bos taurus</name>
    <name type="common">Bovine</name>
    <dbReference type="NCBI Taxonomy" id="9913"/>
    <lineage>
        <taxon>Eukaryota</taxon>
        <taxon>Metazoa</taxon>
        <taxon>Chordata</taxon>
        <taxon>Craniata</taxon>
        <taxon>Vertebrata</taxon>
        <taxon>Euteleostomi</taxon>
        <taxon>Mammalia</taxon>
        <taxon>Eutheria</taxon>
        <taxon>Laurasiatheria</taxon>
        <taxon>Artiodactyla</taxon>
        <taxon>Ruminantia</taxon>
        <taxon>Pecora</taxon>
        <taxon>Bovidae</taxon>
        <taxon>Bovinae</taxon>
        <taxon>Bos</taxon>
    </lineage>
</organism>